<comment type="function">
    <text evidence="1">Transfers the gamma-phosphate of ATP to the 4'-position of a tetraacyldisaccharide 1-phosphate intermediate (termed DS-1-P) to form tetraacyldisaccharide 1,4'-bis-phosphate (lipid IVA).</text>
</comment>
<comment type="catalytic activity">
    <reaction evidence="1">
        <text>a lipid A disaccharide + ATP = a lipid IVA + ADP + H(+)</text>
        <dbReference type="Rhea" id="RHEA:67840"/>
        <dbReference type="ChEBI" id="CHEBI:15378"/>
        <dbReference type="ChEBI" id="CHEBI:30616"/>
        <dbReference type="ChEBI" id="CHEBI:176343"/>
        <dbReference type="ChEBI" id="CHEBI:176425"/>
        <dbReference type="ChEBI" id="CHEBI:456216"/>
        <dbReference type="EC" id="2.7.1.130"/>
    </reaction>
</comment>
<comment type="pathway">
    <text evidence="1">Glycolipid biosynthesis; lipid IV(A) biosynthesis; lipid IV(A) from (3R)-3-hydroxytetradecanoyl-[acyl-carrier-protein] and UDP-N-acetyl-alpha-D-glucosamine: step 6/6.</text>
</comment>
<comment type="similarity">
    <text evidence="1">Belongs to the LpxK family.</text>
</comment>
<sequence>MIARIWSGESPLWRLLLPLSWLYGLVSGAIRLSYKLGLKRAWRAPVPVVVVGNLTAGGNGKTPVVIWLVEKLQQRGVRVGVVSRGYGGKAAAYPLLLTPETTTAEAGDEPVLIYQRTGAPVAVAPERAAAVKAILAAHNVQIIITDDGLQHYRLARDIEIVVIDGVRRFGNGWWLPAGPMRERASRLKTVDAAIVNGGVARAGEIPMQLAPGLAVNLRTGARCDVAQLSNIVAMAGIGHPPRFFATLEACGAHPQKCVPLADHQTLAPADVQALVGEGQTLVMTEKDAVKCRAFAEDNWWFLPVDARLSGEQPDKLLQHITSLVR</sequence>
<reference key="1">
    <citation type="journal article" date="2011" name="J. Bacteriol.">
        <title>Comparative genomics of 28 Salmonella enterica isolates: evidence for CRISPR-mediated adaptive sublineage evolution.</title>
        <authorList>
            <person name="Fricke W.F."/>
            <person name="Mammel M.K."/>
            <person name="McDermott P.F."/>
            <person name="Tartera C."/>
            <person name="White D.G."/>
            <person name="Leclerc J.E."/>
            <person name="Ravel J."/>
            <person name="Cebula T.A."/>
        </authorList>
    </citation>
    <scope>NUCLEOTIDE SEQUENCE [LARGE SCALE GENOMIC DNA]</scope>
    <source>
        <strain>CT_02021853</strain>
    </source>
</reference>
<evidence type="ECO:0000255" key="1">
    <source>
        <dbReference type="HAMAP-Rule" id="MF_00409"/>
    </source>
</evidence>
<dbReference type="EC" id="2.7.1.130" evidence="1"/>
<dbReference type="EMBL" id="CP001144">
    <property type="protein sequence ID" value="ACH77118.1"/>
    <property type="molecule type" value="Genomic_DNA"/>
</dbReference>
<dbReference type="RefSeq" id="WP_000561699.1">
    <property type="nucleotide sequence ID" value="NC_011205.1"/>
</dbReference>
<dbReference type="SMR" id="B5FQ58"/>
<dbReference type="KEGG" id="sed:SeD_A1050"/>
<dbReference type="HOGENOM" id="CLU_038816_2_0_6"/>
<dbReference type="UniPathway" id="UPA00359">
    <property type="reaction ID" value="UER00482"/>
</dbReference>
<dbReference type="Proteomes" id="UP000008322">
    <property type="component" value="Chromosome"/>
</dbReference>
<dbReference type="GO" id="GO:0005886">
    <property type="term" value="C:plasma membrane"/>
    <property type="evidence" value="ECO:0007669"/>
    <property type="project" value="TreeGrafter"/>
</dbReference>
<dbReference type="GO" id="GO:0005524">
    <property type="term" value="F:ATP binding"/>
    <property type="evidence" value="ECO:0007669"/>
    <property type="project" value="UniProtKB-UniRule"/>
</dbReference>
<dbReference type="GO" id="GO:0009029">
    <property type="term" value="F:tetraacyldisaccharide 4'-kinase activity"/>
    <property type="evidence" value="ECO:0007669"/>
    <property type="project" value="UniProtKB-UniRule"/>
</dbReference>
<dbReference type="GO" id="GO:0009245">
    <property type="term" value="P:lipid A biosynthetic process"/>
    <property type="evidence" value="ECO:0007669"/>
    <property type="project" value="UniProtKB-UniRule"/>
</dbReference>
<dbReference type="GO" id="GO:0009244">
    <property type="term" value="P:lipopolysaccharide core region biosynthetic process"/>
    <property type="evidence" value="ECO:0007669"/>
    <property type="project" value="TreeGrafter"/>
</dbReference>
<dbReference type="HAMAP" id="MF_00409">
    <property type="entry name" value="LpxK"/>
    <property type="match status" value="1"/>
</dbReference>
<dbReference type="InterPro" id="IPR003758">
    <property type="entry name" value="LpxK"/>
</dbReference>
<dbReference type="InterPro" id="IPR027417">
    <property type="entry name" value="P-loop_NTPase"/>
</dbReference>
<dbReference type="NCBIfam" id="TIGR00682">
    <property type="entry name" value="lpxK"/>
    <property type="match status" value="1"/>
</dbReference>
<dbReference type="PANTHER" id="PTHR42724">
    <property type="entry name" value="TETRAACYLDISACCHARIDE 4'-KINASE"/>
    <property type="match status" value="1"/>
</dbReference>
<dbReference type="PANTHER" id="PTHR42724:SF1">
    <property type="entry name" value="TETRAACYLDISACCHARIDE 4'-KINASE, MITOCHONDRIAL-RELATED"/>
    <property type="match status" value="1"/>
</dbReference>
<dbReference type="Pfam" id="PF02606">
    <property type="entry name" value="LpxK"/>
    <property type="match status" value="1"/>
</dbReference>
<dbReference type="SUPFAM" id="SSF52540">
    <property type="entry name" value="P-loop containing nucleoside triphosphate hydrolases"/>
    <property type="match status" value="1"/>
</dbReference>
<protein>
    <recommendedName>
        <fullName evidence="1">Tetraacyldisaccharide 4'-kinase</fullName>
        <ecNumber evidence="1">2.7.1.130</ecNumber>
    </recommendedName>
    <alternativeName>
        <fullName evidence="1">Lipid A 4'-kinase</fullName>
    </alternativeName>
</protein>
<organism>
    <name type="scientific">Salmonella dublin (strain CT_02021853)</name>
    <dbReference type="NCBI Taxonomy" id="439851"/>
    <lineage>
        <taxon>Bacteria</taxon>
        <taxon>Pseudomonadati</taxon>
        <taxon>Pseudomonadota</taxon>
        <taxon>Gammaproteobacteria</taxon>
        <taxon>Enterobacterales</taxon>
        <taxon>Enterobacteriaceae</taxon>
        <taxon>Salmonella</taxon>
    </lineage>
</organism>
<proteinExistence type="inferred from homology"/>
<gene>
    <name evidence="1" type="primary">lpxK</name>
    <name type="ordered locus">SeD_A1050</name>
</gene>
<feature type="chain" id="PRO_1000123737" description="Tetraacyldisaccharide 4'-kinase">
    <location>
        <begin position="1"/>
        <end position="325"/>
    </location>
</feature>
<feature type="binding site" evidence="1">
    <location>
        <begin position="55"/>
        <end position="62"/>
    </location>
    <ligand>
        <name>ATP</name>
        <dbReference type="ChEBI" id="CHEBI:30616"/>
    </ligand>
</feature>
<name>LPXK_SALDC</name>
<accession>B5FQ58</accession>
<keyword id="KW-0067">ATP-binding</keyword>
<keyword id="KW-0418">Kinase</keyword>
<keyword id="KW-0441">Lipid A biosynthesis</keyword>
<keyword id="KW-0444">Lipid biosynthesis</keyword>
<keyword id="KW-0443">Lipid metabolism</keyword>
<keyword id="KW-0547">Nucleotide-binding</keyword>
<keyword id="KW-0808">Transferase</keyword>